<keyword id="KW-0963">Cytoplasm</keyword>
<keyword id="KW-0472">Membrane</keyword>
<keyword id="KW-1185">Reference proteome</keyword>
<keyword id="KW-0749">Sporulation</keyword>
<evidence type="ECO:0000256" key="1">
    <source>
        <dbReference type="SAM" id="MobiDB-lite"/>
    </source>
</evidence>
<evidence type="ECO:0000269" key="2">
    <source>
    </source>
</evidence>
<accession>Q12202</accession>
<accession>D6VY56</accession>
<gene>
    <name type="primary">OSW2</name>
    <name type="ordered locus">YLR054C</name>
    <name type="ORF">L2141</name>
</gene>
<name>OSW2_YEAST</name>
<protein>
    <recommendedName>
        <fullName>Outer spore wall protein 2</fullName>
    </recommendedName>
</protein>
<reference key="1">
    <citation type="journal article" date="1997" name="Nature">
        <title>The nucleotide sequence of Saccharomyces cerevisiae chromosome XII.</title>
        <authorList>
            <person name="Johnston M."/>
            <person name="Hillier L.W."/>
            <person name="Riles L."/>
            <person name="Albermann K."/>
            <person name="Andre B."/>
            <person name="Ansorge W."/>
            <person name="Benes V."/>
            <person name="Brueckner M."/>
            <person name="Delius H."/>
            <person name="Dubois E."/>
            <person name="Duesterhoeft A."/>
            <person name="Entian K.-D."/>
            <person name="Floeth M."/>
            <person name="Goffeau A."/>
            <person name="Hebling U."/>
            <person name="Heumann K."/>
            <person name="Heuss-Neitzel D."/>
            <person name="Hilbert H."/>
            <person name="Hilger F."/>
            <person name="Kleine K."/>
            <person name="Koetter P."/>
            <person name="Louis E.J."/>
            <person name="Messenguy F."/>
            <person name="Mewes H.-W."/>
            <person name="Miosga T."/>
            <person name="Moestl D."/>
            <person name="Mueller-Auer S."/>
            <person name="Nentwich U."/>
            <person name="Obermaier B."/>
            <person name="Piravandi E."/>
            <person name="Pohl T.M."/>
            <person name="Portetelle D."/>
            <person name="Purnelle B."/>
            <person name="Rechmann S."/>
            <person name="Rieger M."/>
            <person name="Rinke M."/>
            <person name="Rose M."/>
            <person name="Scharfe M."/>
            <person name="Scherens B."/>
            <person name="Scholler P."/>
            <person name="Schwager C."/>
            <person name="Schwarz S."/>
            <person name="Underwood A.P."/>
            <person name="Urrestarazu L.A."/>
            <person name="Vandenbol M."/>
            <person name="Verhasselt P."/>
            <person name="Vierendeels F."/>
            <person name="Voet M."/>
            <person name="Volckaert G."/>
            <person name="Voss H."/>
            <person name="Wambutt R."/>
            <person name="Wedler E."/>
            <person name="Wedler H."/>
            <person name="Zimmermann F.K."/>
            <person name="Zollner A."/>
            <person name="Hani J."/>
            <person name="Hoheisel J.D."/>
        </authorList>
    </citation>
    <scope>NUCLEOTIDE SEQUENCE [LARGE SCALE GENOMIC DNA]</scope>
    <source>
        <strain>ATCC 204508 / S288c</strain>
    </source>
</reference>
<reference key="2">
    <citation type="journal article" date="2014" name="G3 (Bethesda)">
        <title>The reference genome sequence of Saccharomyces cerevisiae: Then and now.</title>
        <authorList>
            <person name="Engel S.R."/>
            <person name="Dietrich F.S."/>
            <person name="Fisk D.G."/>
            <person name="Binkley G."/>
            <person name="Balakrishnan R."/>
            <person name="Costanzo M.C."/>
            <person name="Dwight S.S."/>
            <person name="Hitz B.C."/>
            <person name="Karra K."/>
            <person name="Nash R.S."/>
            <person name="Weng S."/>
            <person name="Wong E.D."/>
            <person name="Lloyd P."/>
            <person name="Skrzypek M.S."/>
            <person name="Miyasato S.R."/>
            <person name="Simison M."/>
            <person name="Cherry J.M."/>
        </authorList>
    </citation>
    <scope>GENOME REANNOTATION</scope>
    <source>
        <strain>ATCC 204508 / S288c</strain>
    </source>
</reference>
<reference key="3">
    <citation type="journal article" date="2003" name="Genome Biol.">
        <title>Reinvestigation of the Saccharomyces cerevisiae genome annotation by comparison to the genome of a related fungus: Ashbya gossypii.</title>
        <authorList>
            <person name="Brachat S."/>
            <person name="Dietrich F.S."/>
            <person name="Voegeli S."/>
            <person name="Zhang Z."/>
            <person name="Stuart L."/>
            <person name="Lerch A."/>
            <person name="Gates K."/>
            <person name="Gaffney T.D."/>
            <person name="Philippsen P."/>
        </authorList>
    </citation>
    <scope>REVISION OF GENE MODEL</scope>
</reference>
<reference key="4">
    <citation type="journal article" date="2004" name="Eukaryot. Cell">
        <title>Morphogenetic pathway of spore wall assembly in Saccharomyces cerevisiae.</title>
        <authorList>
            <person name="Coluccio A."/>
            <person name="Bogengruber E."/>
            <person name="Conrad M.N."/>
            <person name="Dresser M.E."/>
            <person name="Briza P."/>
            <person name="Neiman A.M."/>
        </authorList>
    </citation>
    <scope>SUBCELLULAR LOCATION</scope>
</reference>
<dbReference type="EMBL" id="X94607">
    <property type="protein sequence ID" value="CAA64301.1"/>
    <property type="molecule type" value="Genomic_DNA"/>
</dbReference>
<dbReference type="EMBL" id="Z73226">
    <property type="protein sequence ID" value="CAA97584.1"/>
    <property type="molecule type" value="Genomic_DNA"/>
</dbReference>
<dbReference type="EMBL" id="BK006945">
    <property type="protein sequence ID" value="DAA09372.1"/>
    <property type="molecule type" value="Genomic_DNA"/>
</dbReference>
<dbReference type="PIR" id="S61628">
    <property type="entry name" value="S61628"/>
</dbReference>
<dbReference type="RefSeq" id="NP_013155.2">
    <property type="nucleotide sequence ID" value="NM_001181941.1"/>
</dbReference>
<dbReference type="BioGRID" id="31329">
    <property type="interactions" value="42"/>
</dbReference>
<dbReference type="DIP" id="DIP-4545N"/>
<dbReference type="FunCoup" id="Q12202">
    <property type="interactions" value="56"/>
</dbReference>
<dbReference type="STRING" id="4932.YLR054C"/>
<dbReference type="PaxDb" id="4932-YLR054C"/>
<dbReference type="PeptideAtlas" id="Q12202"/>
<dbReference type="EnsemblFungi" id="YLR054C_mRNA">
    <property type="protein sequence ID" value="YLR054C"/>
    <property type="gene ID" value="YLR054C"/>
</dbReference>
<dbReference type="GeneID" id="850743"/>
<dbReference type="KEGG" id="sce:YLR054C"/>
<dbReference type="AGR" id="SGD:S000004044"/>
<dbReference type="SGD" id="S000004044">
    <property type="gene designation" value="OSW2"/>
</dbReference>
<dbReference type="VEuPathDB" id="FungiDB:YLR054C"/>
<dbReference type="eggNOG" id="ENOG502QQG0">
    <property type="taxonomic scope" value="Eukaryota"/>
</dbReference>
<dbReference type="HOGENOM" id="CLU_022832_0_0_1"/>
<dbReference type="InParanoid" id="Q12202"/>
<dbReference type="OMA" id="IYEQFDY"/>
<dbReference type="OrthoDB" id="4068630at2759"/>
<dbReference type="BioCyc" id="YEAST:G3O-32210-MONOMER"/>
<dbReference type="BioGRID-ORCS" id="850743">
    <property type="hits" value="0 hits in 10 CRISPR screens"/>
</dbReference>
<dbReference type="PRO" id="PR:Q12202"/>
<dbReference type="Proteomes" id="UP000002311">
    <property type="component" value="Chromosome XII"/>
</dbReference>
<dbReference type="RNAct" id="Q12202">
    <property type="molecule type" value="protein"/>
</dbReference>
<dbReference type="GO" id="GO:0005737">
    <property type="term" value="C:cytoplasm"/>
    <property type="evidence" value="ECO:0000314"/>
    <property type="project" value="SGD"/>
</dbReference>
<dbReference type="GO" id="GO:0005628">
    <property type="term" value="C:prospore membrane"/>
    <property type="evidence" value="ECO:0000314"/>
    <property type="project" value="SGD"/>
</dbReference>
<dbReference type="GO" id="GO:0030476">
    <property type="term" value="P:ascospore wall assembly"/>
    <property type="evidence" value="ECO:0000315"/>
    <property type="project" value="SGD"/>
</dbReference>
<dbReference type="InterPro" id="IPR051402">
    <property type="entry name" value="KPR-Related"/>
</dbReference>
<dbReference type="PANTHER" id="PTHR21708:SF34">
    <property type="entry name" value="OUTER SPORE WALL PROTEIN 2"/>
    <property type="match status" value="1"/>
</dbReference>
<dbReference type="PANTHER" id="PTHR21708">
    <property type="entry name" value="PROBABLE 2-DEHYDROPANTOATE 2-REDUCTASE"/>
    <property type="match status" value="1"/>
</dbReference>
<sequence>MEENQLTCLIVGETPAAQFLGWRLSLSNSFIILVSQYVSSDELVAWKSTKLGANFYTPNILTKDIKELHHKLKHNGANTYSIDIVLVSAISLQSFETTCRLLSDYTNDNTTVLISTDFGCELEPIAISYFGGKCKCVISISCEVECRQLSLGSYALVNDDQCVITLGLTYCDANFEASPTILENTKAASLELQGIKGSNVRRFLLGLTVAKWMKSKLILDPKQMALKMWELLIPKISLNILSIIYEQFDYEKMLENKSTEIIFKDLVKELLGICFAQCGSKIARFLLVKSQGEEEINFGKIVEYCKGKKLQLINSTANEHPEYLSLPFEPYCFYHRFEYPAQILLHQPIILAKKYGVSCSNLNFLYGFYTRLLTLSGLSINGGRCEHALSMLDSRIGGGINVASGINSGQDFTDGDNEDQDKGKNRVDKNVKEGSFISLTQRFTMTSPLGVNDPALPADLEKLYLGAEYISNCDANTSGGQKRVKSPTKADTGYDDKHLPDDTIHTFEDEYLADEDDFSCLGIDKRSSTKPTKPLEKFGVVAVPHFIRRFSIKRSSKDKSNDMKRPYTTSSLELQLRSNHFMFAKEYQDLHRQLYYEVKPRTQSELDARRRNYSELESQMWKIKHRFNIHRGALPRPRTNPYELLLDHIDVLNRGNTGDILRFTTSRYGGVDTYDSILRDQSTIMELLDKRCAYSPPVLFDNEAKERDHDRDCYQDYNHDHRSH</sequence>
<organism>
    <name type="scientific">Saccharomyces cerevisiae (strain ATCC 204508 / S288c)</name>
    <name type="common">Baker's yeast</name>
    <dbReference type="NCBI Taxonomy" id="559292"/>
    <lineage>
        <taxon>Eukaryota</taxon>
        <taxon>Fungi</taxon>
        <taxon>Dikarya</taxon>
        <taxon>Ascomycota</taxon>
        <taxon>Saccharomycotina</taxon>
        <taxon>Saccharomycetes</taxon>
        <taxon>Saccharomycetales</taxon>
        <taxon>Saccharomycetaceae</taxon>
        <taxon>Saccharomyces</taxon>
    </lineage>
</organism>
<proteinExistence type="predicted"/>
<feature type="chain" id="PRO_0000076276" description="Outer spore wall protein 2">
    <location>
        <begin position="1"/>
        <end position="724"/>
    </location>
</feature>
<feature type="region of interest" description="Disordered" evidence="1">
    <location>
        <begin position="407"/>
        <end position="427"/>
    </location>
</feature>
<feature type="region of interest" description="Disordered" evidence="1">
    <location>
        <begin position="477"/>
        <end position="497"/>
    </location>
</feature>
<comment type="function">
    <text>May be involved in a late step of spore wall assembly.</text>
</comment>
<comment type="subcellular location">
    <subcellularLocation>
        <location evidence="2">Cytoplasm</location>
    </subcellularLocation>
    <subcellularLocation>
        <location evidence="2">Prospore membrane</location>
    </subcellularLocation>
    <text>In mature spores. Localized around the prospore membrane during meiosis II.</text>
</comment>